<organism>
    <name type="scientific">Jannaschia sp. (strain CCS1)</name>
    <dbReference type="NCBI Taxonomy" id="290400"/>
    <lineage>
        <taxon>Bacteria</taxon>
        <taxon>Pseudomonadati</taxon>
        <taxon>Pseudomonadota</taxon>
        <taxon>Alphaproteobacteria</taxon>
        <taxon>Rhodobacterales</taxon>
        <taxon>Roseobacteraceae</taxon>
        <taxon>Jannaschia</taxon>
    </lineage>
</organism>
<keyword id="KW-0378">Hydrolase</keyword>
<keyword id="KW-0464">Manganese</keyword>
<keyword id="KW-1185">Reference proteome</keyword>
<comment type="catalytic activity">
    <reaction evidence="1">
        <text>adenine + H2O + H(+) = hypoxanthine + NH4(+)</text>
        <dbReference type="Rhea" id="RHEA:23688"/>
        <dbReference type="ChEBI" id="CHEBI:15377"/>
        <dbReference type="ChEBI" id="CHEBI:15378"/>
        <dbReference type="ChEBI" id="CHEBI:16708"/>
        <dbReference type="ChEBI" id="CHEBI:17368"/>
        <dbReference type="ChEBI" id="CHEBI:28938"/>
        <dbReference type="EC" id="3.5.4.2"/>
    </reaction>
</comment>
<comment type="cofactor">
    <cofactor evidence="1">
        <name>Mn(2+)</name>
        <dbReference type="ChEBI" id="CHEBI:29035"/>
    </cofactor>
</comment>
<comment type="similarity">
    <text evidence="1">Belongs to the metallo-dependent hydrolases superfamily. Adenine deaminase family.</text>
</comment>
<reference key="1">
    <citation type="submission" date="2006-02" db="EMBL/GenBank/DDBJ databases">
        <title>Complete sequence of chromosome of Jannaschia sp. CCS1.</title>
        <authorList>
            <consortium name="US DOE Joint Genome Institute"/>
            <person name="Copeland A."/>
            <person name="Lucas S."/>
            <person name="Lapidus A."/>
            <person name="Barry K."/>
            <person name="Detter J.C."/>
            <person name="Glavina del Rio T."/>
            <person name="Hammon N."/>
            <person name="Israni S."/>
            <person name="Pitluck S."/>
            <person name="Brettin T."/>
            <person name="Bruce D."/>
            <person name="Han C."/>
            <person name="Tapia R."/>
            <person name="Gilna P."/>
            <person name="Chertkov O."/>
            <person name="Saunders E."/>
            <person name="Schmutz J."/>
            <person name="Larimer F."/>
            <person name="Land M."/>
            <person name="Kyrpides N."/>
            <person name="Lykidis A."/>
            <person name="Moran M.A."/>
            <person name="Belas R."/>
            <person name="Ye W."/>
            <person name="Buchan A."/>
            <person name="Gonzalez J.M."/>
            <person name="Schell M.A."/>
            <person name="Richardson P."/>
        </authorList>
    </citation>
    <scope>NUCLEOTIDE SEQUENCE [LARGE SCALE GENOMIC DNA]</scope>
    <source>
        <strain>CCS1</strain>
    </source>
</reference>
<feature type="chain" id="PRO_0000296726" description="Adenine deaminase 2">
    <location>
        <begin position="1"/>
        <end position="623"/>
    </location>
</feature>
<name>ADEC2_JANSC</name>
<accession>Q28MB2</accession>
<evidence type="ECO:0000255" key="1">
    <source>
        <dbReference type="HAMAP-Rule" id="MF_01518"/>
    </source>
</evidence>
<protein>
    <recommendedName>
        <fullName evidence="1">Adenine deaminase 2</fullName>
        <shortName evidence="1">Adenase 2</shortName>
        <shortName evidence="1">Adenine aminase 2</shortName>
        <ecNumber evidence="1">3.5.4.2</ecNumber>
    </recommendedName>
</protein>
<sequence>MTDQPAPTDHLIRAADEVKIRQRLVRVALGHVAGDTRLRVGKLLDVHSRMWLSDQEIILSGRRIAYVGPAGSYPGGVAHEVHEPDLMAVPGFGEVHKHIESSHVTPEWEAALVLPHGNTWTCEASHEFSNVNGPHNLEFWLTARLAGSPQKIFPLPGSAVPPTAYEWGGGHFGYDEQAGFLNESLMVAGLDEVMDWPAVWNPENPSYDRLWGMIEATFEKRGVIEGHAAGIRDMATINAFAAAGLASDHEAWTTEEVLDKLRRGLFMELRPHSLSEMVKGLLEAGLEDWGQFALTTDDRSCSDTLKMGATDHNVRLAISAGLSPEVAIQMVTINPARHMRLTPWVGSLAPGRFADIVLLDDLPSVSIRQVWADGELVAEDGTYLKPIPKIDWPDWATQTVKIDRAMMADDFAIPAKRGRDTMHAALLRPFHWDDDFITMDLPVKDGQVQRDPRRNVTKFAIVDRFSGEGKTSAMFWLGTGPRTSDTALACSMGHDKHNVWAVGSSDAAMAMAVNALRDIQGGWALVREGQLVATVRYEVGGLMTCRPPAELDAEMQALYAEGEKIDWMYEPTVSPRWFPGFPERLAFATLTCAPWRWVLVAPSDRAPDGFVNVATGQTHPVVW</sequence>
<dbReference type="EC" id="3.5.4.2" evidence="1"/>
<dbReference type="EMBL" id="CP000264">
    <property type="protein sequence ID" value="ABD56150.1"/>
    <property type="molecule type" value="Genomic_DNA"/>
</dbReference>
<dbReference type="RefSeq" id="WP_011456352.1">
    <property type="nucleotide sequence ID" value="NC_007802.1"/>
</dbReference>
<dbReference type="SMR" id="Q28MB2"/>
<dbReference type="STRING" id="290400.Jann_3233"/>
<dbReference type="KEGG" id="jan:Jann_3233"/>
<dbReference type="eggNOG" id="COG1001">
    <property type="taxonomic scope" value="Bacteria"/>
</dbReference>
<dbReference type="HOGENOM" id="CLU_027935_0_0_5"/>
<dbReference type="OrthoDB" id="9775607at2"/>
<dbReference type="Proteomes" id="UP000008326">
    <property type="component" value="Chromosome"/>
</dbReference>
<dbReference type="GO" id="GO:0000034">
    <property type="term" value="F:adenine deaminase activity"/>
    <property type="evidence" value="ECO:0007669"/>
    <property type="project" value="UniProtKB-UniRule"/>
</dbReference>
<dbReference type="GO" id="GO:0006146">
    <property type="term" value="P:adenine catabolic process"/>
    <property type="evidence" value="ECO:0007669"/>
    <property type="project" value="InterPro"/>
</dbReference>
<dbReference type="Gene3D" id="3.20.20.140">
    <property type="entry name" value="Metal-dependent hydrolases"/>
    <property type="match status" value="1"/>
</dbReference>
<dbReference type="Gene3D" id="2.30.40.10">
    <property type="entry name" value="Urease, subunit C, domain 1"/>
    <property type="match status" value="1"/>
</dbReference>
<dbReference type="HAMAP" id="MF_01518">
    <property type="entry name" value="Adenine_deamin"/>
    <property type="match status" value="1"/>
</dbReference>
<dbReference type="InterPro" id="IPR006679">
    <property type="entry name" value="Adenine_deam"/>
</dbReference>
<dbReference type="InterPro" id="IPR026912">
    <property type="entry name" value="Adenine_deam_C"/>
</dbReference>
<dbReference type="InterPro" id="IPR006680">
    <property type="entry name" value="Amidohydro-rel"/>
</dbReference>
<dbReference type="InterPro" id="IPR011059">
    <property type="entry name" value="Metal-dep_hydrolase_composite"/>
</dbReference>
<dbReference type="InterPro" id="IPR032466">
    <property type="entry name" value="Metal_Hydrolase"/>
</dbReference>
<dbReference type="PANTHER" id="PTHR11113:SF2">
    <property type="entry name" value="ADENINE DEAMINASE"/>
    <property type="match status" value="1"/>
</dbReference>
<dbReference type="PANTHER" id="PTHR11113">
    <property type="entry name" value="N-ACETYLGLUCOSAMINE-6-PHOSPHATE DEACETYLASE"/>
    <property type="match status" value="1"/>
</dbReference>
<dbReference type="Pfam" id="PF13382">
    <property type="entry name" value="Adenine_deam_C"/>
    <property type="match status" value="1"/>
</dbReference>
<dbReference type="Pfam" id="PF01979">
    <property type="entry name" value="Amidohydro_1"/>
    <property type="match status" value="1"/>
</dbReference>
<dbReference type="SUPFAM" id="SSF51338">
    <property type="entry name" value="Composite domain of metallo-dependent hydrolases"/>
    <property type="match status" value="1"/>
</dbReference>
<dbReference type="SUPFAM" id="SSF51556">
    <property type="entry name" value="Metallo-dependent hydrolases"/>
    <property type="match status" value="1"/>
</dbReference>
<gene>
    <name evidence="1" type="primary">ade2</name>
    <name type="ordered locus">Jann_3233</name>
</gene>
<proteinExistence type="inferred from homology"/>